<keyword id="KW-0002">3D-structure</keyword>
<keyword id="KW-1185">Reference proteome</keyword>
<keyword id="KW-0687">Ribonucleoprotein</keyword>
<protein>
    <recommendedName>
        <fullName>Putative snRNP Sm-like protein</fullName>
    </recommendedName>
</protein>
<organism>
    <name type="scientific">Methanothermobacter thermautotrophicus (strain ATCC 29096 / DSM 1053 / JCM 10044 / NBRC 100330 / Delta H)</name>
    <name type="common">Methanobacterium thermoautotrophicum</name>
    <dbReference type="NCBI Taxonomy" id="187420"/>
    <lineage>
        <taxon>Archaea</taxon>
        <taxon>Methanobacteriati</taxon>
        <taxon>Methanobacteriota</taxon>
        <taxon>Methanomada group</taxon>
        <taxon>Methanobacteria</taxon>
        <taxon>Methanobacteriales</taxon>
        <taxon>Methanobacteriaceae</taxon>
        <taxon>Methanothermobacter</taxon>
    </lineage>
</organism>
<sequence length="81" mass="9061">MIDVSSQRVNVQRPLDALGNSLNSPVIIKLKGDREFRGVLKSFDLHMNLVLNDAEELEDGEVTRRLGTVLIRGDNIVYISP</sequence>
<feature type="chain" id="PRO_0000125595" description="Putative snRNP Sm-like protein">
    <location>
        <begin position="1"/>
        <end position="81"/>
    </location>
</feature>
<feature type="domain" description="Sm" evidence="1">
    <location>
        <begin position="13"/>
        <end position="81"/>
    </location>
</feature>
<feature type="helix" evidence="3">
    <location>
        <begin position="16"/>
        <end position="20"/>
    </location>
</feature>
<feature type="turn" evidence="3">
    <location>
        <begin position="21"/>
        <end position="23"/>
    </location>
</feature>
<feature type="strand" evidence="3">
    <location>
        <begin position="24"/>
        <end position="30"/>
    </location>
</feature>
<feature type="turn" evidence="3">
    <location>
        <begin position="31"/>
        <end position="33"/>
    </location>
</feature>
<feature type="strand" evidence="3">
    <location>
        <begin position="34"/>
        <end position="43"/>
    </location>
</feature>
<feature type="strand" evidence="3">
    <location>
        <begin position="49"/>
        <end position="58"/>
    </location>
</feature>
<feature type="strand" evidence="3">
    <location>
        <begin position="61"/>
        <end position="71"/>
    </location>
</feature>
<feature type="helix" evidence="3">
    <location>
        <begin position="73"/>
        <end position="75"/>
    </location>
</feature>
<feature type="strand" evidence="3">
    <location>
        <begin position="76"/>
        <end position="80"/>
    </location>
</feature>
<evidence type="ECO:0000255" key="1">
    <source>
        <dbReference type="PROSITE-ProRule" id="PRU01346"/>
    </source>
</evidence>
<evidence type="ECO:0000305" key="2"/>
<evidence type="ECO:0007829" key="3">
    <source>
        <dbReference type="PDB" id="1MGQ"/>
    </source>
</evidence>
<gene>
    <name type="ordered locus">MTH_649</name>
</gene>
<accession>O26745</accession>
<name>RUXX_METTH</name>
<dbReference type="EMBL" id="AE000666">
    <property type="protein sequence ID" value="AAB85154.1"/>
    <property type="molecule type" value="Genomic_DNA"/>
</dbReference>
<dbReference type="PIR" id="C69186">
    <property type="entry name" value="C69186"/>
</dbReference>
<dbReference type="PDB" id="1I81">
    <property type="method" value="X-ray"/>
    <property type="resolution" value="2.00 A"/>
    <property type="chains" value="A/B/C/D/E/F/G=2-81"/>
</dbReference>
<dbReference type="PDB" id="1JBM">
    <property type="method" value="X-ray"/>
    <property type="resolution" value="1.85 A"/>
    <property type="chains" value="A/B/C/D/E/F/G=1-80"/>
</dbReference>
<dbReference type="PDB" id="1JRI">
    <property type="method" value="X-ray"/>
    <property type="resolution" value="2.80 A"/>
    <property type="chains" value="A/B/C/D/E/F/G/H/I/J/K/L/M/N=1-80"/>
</dbReference>
<dbReference type="PDB" id="1LOJ">
    <property type="method" value="X-ray"/>
    <property type="resolution" value="1.90 A"/>
    <property type="chains" value="A/B/C/D/E/F/G/H/I/J/K/L/M/N=1-80"/>
</dbReference>
<dbReference type="PDB" id="1MGQ">
    <property type="method" value="X-ray"/>
    <property type="resolution" value="1.70 A"/>
    <property type="chains" value="A/B/C/D/E/F/G=2-81"/>
</dbReference>
<dbReference type="PDBsum" id="1I81"/>
<dbReference type="PDBsum" id="1JBM"/>
<dbReference type="PDBsum" id="1JRI"/>
<dbReference type="PDBsum" id="1LOJ"/>
<dbReference type="PDBsum" id="1MGQ"/>
<dbReference type="SMR" id="O26745"/>
<dbReference type="STRING" id="187420.MTH_649"/>
<dbReference type="PaxDb" id="187420-MTH_649"/>
<dbReference type="EnsemblBacteria" id="AAB85154">
    <property type="protein sequence ID" value="AAB85154"/>
    <property type="gene ID" value="MTH_649"/>
</dbReference>
<dbReference type="KEGG" id="mth:MTH_649"/>
<dbReference type="PATRIC" id="fig|187420.15.peg.628"/>
<dbReference type="HOGENOM" id="CLU_076902_11_1_2"/>
<dbReference type="InParanoid" id="O26745"/>
<dbReference type="EvolutionaryTrace" id="O26745"/>
<dbReference type="Proteomes" id="UP000005223">
    <property type="component" value="Chromosome"/>
</dbReference>
<dbReference type="GO" id="GO:1990904">
    <property type="term" value="C:ribonucleoprotein complex"/>
    <property type="evidence" value="ECO:0007669"/>
    <property type="project" value="UniProtKB-KW"/>
</dbReference>
<dbReference type="GO" id="GO:0120114">
    <property type="term" value="C:Sm-like protein family complex"/>
    <property type="evidence" value="ECO:0007669"/>
    <property type="project" value="UniProtKB-ARBA"/>
</dbReference>
<dbReference type="GO" id="GO:0003723">
    <property type="term" value="F:RNA binding"/>
    <property type="evidence" value="ECO:0007669"/>
    <property type="project" value="InterPro"/>
</dbReference>
<dbReference type="GO" id="GO:0000398">
    <property type="term" value="P:mRNA splicing, via spliceosome"/>
    <property type="evidence" value="ECO:0007669"/>
    <property type="project" value="InterPro"/>
</dbReference>
<dbReference type="CDD" id="cd01731">
    <property type="entry name" value="archaeal_Sm1"/>
    <property type="match status" value="1"/>
</dbReference>
<dbReference type="Gene3D" id="2.30.30.100">
    <property type="match status" value="1"/>
</dbReference>
<dbReference type="HAMAP" id="MF_00257">
    <property type="entry name" value="Lsm_RuxX"/>
    <property type="match status" value="1"/>
</dbReference>
<dbReference type="InterPro" id="IPR016487">
    <property type="entry name" value="Lsm6/sSmF"/>
</dbReference>
<dbReference type="InterPro" id="IPR010920">
    <property type="entry name" value="LSM_dom_sf"/>
</dbReference>
<dbReference type="InterPro" id="IPR047575">
    <property type="entry name" value="Sm"/>
</dbReference>
<dbReference type="InterPro" id="IPR001163">
    <property type="entry name" value="Sm_dom_euk/arc"/>
</dbReference>
<dbReference type="InterPro" id="IPR022901">
    <property type="entry name" value="snRNP_Sm-like_arc"/>
</dbReference>
<dbReference type="NCBIfam" id="NF001963">
    <property type="entry name" value="PRK00737.1"/>
    <property type="match status" value="1"/>
</dbReference>
<dbReference type="PANTHER" id="PTHR11021:SF0">
    <property type="entry name" value="SMALL NUCLEAR RIBONUCLEOPROTEIN F"/>
    <property type="match status" value="1"/>
</dbReference>
<dbReference type="PANTHER" id="PTHR11021">
    <property type="entry name" value="SMALL NUCLEAR RIBONUCLEOPROTEIN F SNRNP-F"/>
    <property type="match status" value="1"/>
</dbReference>
<dbReference type="Pfam" id="PF01423">
    <property type="entry name" value="LSM"/>
    <property type="match status" value="1"/>
</dbReference>
<dbReference type="PIRSF" id="PIRSF006609">
    <property type="entry name" value="snRNP_SmF"/>
    <property type="match status" value="1"/>
</dbReference>
<dbReference type="SMART" id="SM00651">
    <property type="entry name" value="Sm"/>
    <property type="match status" value="1"/>
</dbReference>
<dbReference type="SUPFAM" id="SSF50182">
    <property type="entry name" value="Sm-like ribonucleoproteins"/>
    <property type="match status" value="1"/>
</dbReference>
<dbReference type="PROSITE" id="PS52002">
    <property type="entry name" value="SM"/>
    <property type="match status" value="1"/>
</dbReference>
<reference key="1">
    <citation type="journal article" date="1997" name="J. Bacteriol.">
        <title>Complete genome sequence of Methanobacterium thermoautotrophicum deltaH: functional analysis and comparative genomics.</title>
        <authorList>
            <person name="Smith D.R."/>
            <person name="Doucette-Stamm L.A."/>
            <person name="Deloughery C."/>
            <person name="Lee H.-M."/>
            <person name="Dubois J."/>
            <person name="Aldredge T."/>
            <person name="Bashirzadeh R."/>
            <person name="Blakely D."/>
            <person name="Cook R."/>
            <person name="Gilbert K."/>
            <person name="Harrison D."/>
            <person name="Hoang L."/>
            <person name="Keagle P."/>
            <person name="Lumm W."/>
            <person name="Pothier B."/>
            <person name="Qiu D."/>
            <person name="Spadafora R."/>
            <person name="Vicare R."/>
            <person name="Wang Y."/>
            <person name="Wierzbowski J."/>
            <person name="Gibson R."/>
            <person name="Jiwani N."/>
            <person name="Caruso A."/>
            <person name="Bush D."/>
            <person name="Safer H."/>
            <person name="Patwell D."/>
            <person name="Prabhakar S."/>
            <person name="McDougall S."/>
            <person name="Shimer G."/>
            <person name="Goyal A."/>
            <person name="Pietrovski S."/>
            <person name="Church G.M."/>
            <person name="Daniels C.J."/>
            <person name="Mao J.-I."/>
            <person name="Rice P."/>
            <person name="Noelling J."/>
            <person name="Reeve J.N."/>
        </authorList>
    </citation>
    <scope>NUCLEOTIDE SEQUENCE [LARGE SCALE GENOMIC DNA]</scope>
    <source>
        <strain>ATCC 29096 / DSM 1053 / JCM 10044 / NBRC 100330 / Delta H</strain>
    </source>
</reference>
<proteinExistence type="evidence at protein level"/>
<comment type="similarity">
    <text evidence="2">Belongs to the snRNP Sm proteins family.</text>
</comment>